<dbReference type="EMBL" id="AE016828">
    <property type="protein sequence ID" value="AAO89808.1"/>
    <property type="molecule type" value="Genomic_DNA"/>
</dbReference>
<dbReference type="RefSeq" id="NP_819294.1">
    <property type="nucleotide sequence ID" value="NC_002971.4"/>
</dbReference>
<dbReference type="RefSeq" id="WP_010957461.1">
    <property type="nucleotide sequence ID" value="NZ_CCYB01000060.1"/>
</dbReference>
<dbReference type="SMR" id="Q83ER4"/>
<dbReference type="STRING" id="227377.CBU_0250"/>
<dbReference type="DNASU" id="1208131"/>
<dbReference type="EnsemblBacteria" id="AAO89808">
    <property type="protein sequence ID" value="AAO89808"/>
    <property type="gene ID" value="CBU_0250"/>
</dbReference>
<dbReference type="GeneID" id="1208131"/>
<dbReference type="KEGG" id="cbu:CBU_0250"/>
<dbReference type="PATRIC" id="fig|227377.7.peg.245"/>
<dbReference type="eggNOG" id="COG0094">
    <property type="taxonomic scope" value="Bacteria"/>
</dbReference>
<dbReference type="HOGENOM" id="CLU_061015_2_1_6"/>
<dbReference type="OrthoDB" id="9806626at2"/>
<dbReference type="Proteomes" id="UP000002671">
    <property type="component" value="Chromosome"/>
</dbReference>
<dbReference type="GO" id="GO:0022625">
    <property type="term" value="C:cytosolic large ribosomal subunit"/>
    <property type="evidence" value="ECO:0000318"/>
    <property type="project" value="GO_Central"/>
</dbReference>
<dbReference type="GO" id="GO:0003723">
    <property type="term" value="F:RNA binding"/>
    <property type="evidence" value="ECO:0000318"/>
    <property type="project" value="GO_Central"/>
</dbReference>
<dbReference type="GO" id="GO:0019843">
    <property type="term" value="F:rRNA binding"/>
    <property type="evidence" value="ECO:0007669"/>
    <property type="project" value="UniProtKB-UniRule"/>
</dbReference>
<dbReference type="GO" id="GO:0003735">
    <property type="term" value="F:structural constituent of ribosome"/>
    <property type="evidence" value="ECO:0000318"/>
    <property type="project" value="GO_Central"/>
</dbReference>
<dbReference type="GO" id="GO:0000049">
    <property type="term" value="F:tRNA binding"/>
    <property type="evidence" value="ECO:0007669"/>
    <property type="project" value="UniProtKB-UniRule"/>
</dbReference>
<dbReference type="GO" id="GO:0006412">
    <property type="term" value="P:translation"/>
    <property type="evidence" value="ECO:0000318"/>
    <property type="project" value="GO_Central"/>
</dbReference>
<dbReference type="FunFam" id="3.30.1440.10:FF:000001">
    <property type="entry name" value="50S ribosomal protein L5"/>
    <property type="match status" value="1"/>
</dbReference>
<dbReference type="Gene3D" id="3.30.1440.10">
    <property type="match status" value="1"/>
</dbReference>
<dbReference type="HAMAP" id="MF_01333_B">
    <property type="entry name" value="Ribosomal_uL5_B"/>
    <property type="match status" value="1"/>
</dbReference>
<dbReference type="InterPro" id="IPR002132">
    <property type="entry name" value="Ribosomal_uL5"/>
</dbReference>
<dbReference type="InterPro" id="IPR020930">
    <property type="entry name" value="Ribosomal_uL5_bac-type"/>
</dbReference>
<dbReference type="InterPro" id="IPR031309">
    <property type="entry name" value="Ribosomal_uL5_C"/>
</dbReference>
<dbReference type="InterPro" id="IPR020929">
    <property type="entry name" value="Ribosomal_uL5_CS"/>
</dbReference>
<dbReference type="InterPro" id="IPR022803">
    <property type="entry name" value="Ribosomal_uL5_dom_sf"/>
</dbReference>
<dbReference type="InterPro" id="IPR031310">
    <property type="entry name" value="Ribosomal_uL5_N"/>
</dbReference>
<dbReference type="NCBIfam" id="NF000585">
    <property type="entry name" value="PRK00010.1"/>
    <property type="match status" value="1"/>
</dbReference>
<dbReference type="PANTHER" id="PTHR11994">
    <property type="entry name" value="60S RIBOSOMAL PROTEIN L11-RELATED"/>
    <property type="match status" value="1"/>
</dbReference>
<dbReference type="Pfam" id="PF00281">
    <property type="entry name" value="Ribosomal_L5"/>
    <property type="match status" value="1"/>
</dbReference>
<dbReference type="Pfam" id="PF00673">
    <property type="entry name" value="Ribosomal_L5_C"/>
    <property type="match status" value="1"/>
</dbReference>
<dbReference type="PIRSF" id="PIRSF002161">
    <property type="entry name" value="Ribosomal_L5"/>
    <property type="match status" value="1"/>
</dbReference>
<dbReference type="SUPFAM" id="SSF55282">
    <property type="entry name" value="RL5-like"/>
    <property type="match status" value="1"/>
</dbReference>
<dbReference type="PROSITE" id="PS00358">
    <property type="entry name" value="RIBOSOMAL_L5"/>
    <property type="match status" value="1"/>
</dbReference>
<name>RL5_COXBU</name>
<feature type="chain" id="PRO_0000124922" description="Large ribosomal subunit protein uL5">
    <location>
        <begin position="1"/>
        <end position="182"/>
    </location>
</feature>
<reference key="1">
    <citation type="journal article" date="2003" name="Proc. Natl. Acad. Sci. U.S.A.">
        <title>Complete genome sequence of the Q-fever pathogen, Coxiella burnetii.</title>
        <authorList>
            <person name="Seshadri R."/>
            <person name="Paulsen I.T."/>
            <person name="Eisen J.A."/>
            <person name="Read T.D."/>
            <person name="Nelson K.E."/>
            <person name="Nelson W.C."/>
            <person name="Ward N.L."/>
            <person name="Tettelin H."/>
            <person name="Davidsen T.M."/>
            <person name="Beanan M.J."/>
            <person name="DeBoy R.T."/>
            <person name="Daugherty S.C."/>
            <person name="Brinkac L.M."/>
            <person name="Madupu R."/>
            <person name="Dodson R.J."/>
            <person name="Khouri H.M."/>
            <person name="Lee K.H."/>
            <person name="Carty H.A."/>
            <person name="Scanlan D."/>
            <person name="Heinzen R.A."/>
            <person name="Thompson H.A."/>
            <person name="Samuel J.E."/>
            <person name="Fraser C.M."/>
            <person name="Heidelberg J.F."/>
        </authorList>
    </citation>
    <scope>NUCLEOTIDE SEQUENCE [LARGE SCALE GENOMIC DNA]</scope>
    <source>
        <strain>RSA 493 / Nine Mile phase I</strain>
    </source>
</reference>
<sequence length="182" mass="20748">MVELQELYKKTITPALQKEFGFKSVMAVPRLEKITLNMGLGEAVADKKVIERAMDDMIKISGQKPLITYARKSEAGFKIRAGWPIGCKVTLRRDRMYEFLKRLISIAIPRIRDFRGLSPKSFDGRGNYSLGIREQIVFPEIQYDKVDAIRGMDITITTTARTDEEGRALLKAFGFPLKDESR</sequence>
<accession>Q83ER4</accession>
<protein>
    <recommendedName>
        <fullName evidence="1">Large ribosomal subunit protein uL5</fullName>
    </recommendedName>
    <alternativeName>
        <fullName evidence="2">50S ribosomal protein L5</fullName>
    </alternativeName>
</protein>
<organism>
    <name type="scientific">Coxiella burnetii (strain RSA 493 / Nine Mile phase I)</name>
    <dbReference type="NCBI Taxonomy" id="227377"/>
    <lineage>
        <taxon>Bacteria</taxon>
        <taxon>Pseudomonadati</taxon>
        <taxon>Pseudomonadota</taxon>
        <taxon>Gammaproteobacteria</taxon>
        <taxon>Legionellales</taxon>
        <taxon>Coxiellaceae</taxon>
        <taxon>Coxiella</taxon>
    </lineage>
</organism>
<proteinExistence type="inferred from homology"/>
<keyword id="KW-1185">Reference proteome</keyword>
<keyword id="KW-0687">Ribonucleoprotein</keyword>
<keyword id="KW-0689">Ribosomal protein</keyword>
<keyword id="KW-0694">RNA-binding</keyword>
<keyword id="KW-0699">rRNA-binding</keyword>
<keyword id="KW-0820">tRNA-binding</keyword>
<comment type="function">
    <text evidence="1">This is one of the proteins that bind and probably mediate the attachment of the 5S RNA into the large ribosomal subunit, where it forms part of the central protuberance. In the 70S ribosome it contacts protein S13 of the 30S subunit (bridge B1b), connecting the 2 subunits; this bridge is implicated in subunit movement. Contacts the P site tRNA; the 5S rRNA and some of its associated proteins might help stabilize positioning of ribosome-bound tRNAs.</text>
</comment>
<comment type="subunit">
    <text evidence="1">Part of the 50S ribosomal subunit; part of the 5S rRNA/L5/L18/L25 subcomplex. Contacts the 5S rRNA and the P site tRNA. Forms a bridge to the 30S subunit in the 70S ribosome.</text>
</comment>
<comment type="similarity">
    <text evidence="1">Belongs to the universal ribosomal protein uL5 family.</text>
</comment>
<gene>
    <name evidence="1" type="primary">rplE</name>
    <name type="ordered locus">CBU_0250</name>
</gene>
<evidence type="ECO:0000255" key="1">
    <source>
        <dbReference type="HAMAP-Rule" id="MF_01333"/>
    </source>
</evidence>
<evidence type="ECO:0000305" key="2"/>